<organism>
    <name type="scientific">Brucella anthropi (strain ATCC 49188 / DSM 6882 / CCUG 24695 / JCM 21032 / LMG 3331 / NBRC 15819 / NCTC 12168 / Alc 37)</name>
    <name type="common">Ochrobactrum anthropi</name>
    <dbReference type="NCBI Taxonomy" id="439375"/>
    <lineage>
        <taxon>Bacteria</taxon>
        <taxon>Pseudomonadati</taxon>
        <taxon>Pseudomonadota</taxon>
        <taxon>Alphaproteobacteria</taxon>
        <taxon>Hyphomicrobiales</taxon>
        <taxon>Brucellaceae</taxon>
        <taxon>Brucella/Ochrobactrum group</taxon>
        <taxon>Brucella</taxon>
    </lineage>
</organism>
<comment type="function">
    <text evidence="2">GTP hydrolase that promotes the GTP-dependent binding of aminoacyl-tRNA to the A-site of ribosomes during protein biosynthesis.</text>
</comment>
<comment type="catalytic activity">
    <reaction evidence="2">
        <text>GTP + H2O = GDP + phosphate + H(+)</text>
        <dbReference type="Rhea" id="RHEA:19669"/>
        <dbReference type="ChEBI" id="CHEBI:15377"/>
        <dbReference type="ChEBI" id="CHEBI:15378"/>
        <dbReference type="ChEBI" id="CHEBI:37565"/>
        <dbReference type="ChEBI" id="CHEBI:43474"/>
        <dbReference type="ChEBI" id="CHEBI:58189"/>
        <dbReference type="EC" id="3.6.5.3"/>
    </reaction>
    <physiologicalReaction direction="left-to-right" evidence="2">
        <dbReference type="Rhea" id="RHEA:19670"/>
    </physiologicalReaction>
</comment>
<comment type="subunit">
    <text evidence="2">Monomer.</text>
</comment>
<comment type="subcellular location">
    <subcellularLocation>
        <location evidence="2">Cytoplasm</location>
    </subcellularLocation>
</comment>
<comment type="similarity">
    <text evidence="2">Belongs to the TRAFAC class translation factor GTPase superfamily. Classic translation factor GTPase family. EF-Tu/EF-1A subfamily.</text>
</comment>
<gene>
    <name evidence="2" type="primary">tuf1</name>
    <name type="ordered locus">Oant_1940</name>
</gene>
<gene>
    <name evidence="2" type="primary">tuf2</name>
    <name type="ordered locus">Oant_1954</name>
</gene>
<evidence type="ECO:0000250" key="1"/>
<evidence type="ECO:0000255" key="2">
    <source>
        <dbReference type="HAMAP-Rule" id="MF_00118"/>
    </source>
</evidence>
<protein>
    <recommendedName>
        <fullName evidence="2">Elongation factor Tu</fullName>
        <shortName evidence="2">EF-Tu</shortName>
        <ecNumber evidence="2">3.6.5.3</ecNumber>
    </recommendedName>
</protein>
<dbReference type="EC" id="3.6.5.3" evidence="2"/>
<dbReference type="EMBL" id="CP000758">
    <property type="protein sequence ID" value="ABS14656.1"/>
    <property type="molecule type" value="Genomic_DNA"/>
</dbReference>
<dbReference type="EMBL" id="CP000758">
    <property type="protein sequence ID" value="ABS14670.1"/>
    <property type="molecule type" value="Genomic_DNA"/>
</dbReference>
<dbReference type="SMR" id="A6X0A2"/>
<dbReference type="STRING" id="439375.Oant_1940"/>
<dbReference type="KEGG" id="oan:Oant_1940"/>
<dbReference type="KEGG" id="oan:Oant_1954"/>
<dbReference type="PATRIC" id="fig|439375.7.peg.2056"/>
<dbReference type="eggNOG" id="COG0050">
    <property type="taxonomic scope" value="Bacteria"/>
</dbReference>
<dbReference type="HOGENOM" id="CLU_007265_0_0_5"/>
<dbReference type="PhylomeDB" id="A6X0A2"/>
<dbReference type="Proteomes" id="UP000002301">
    <property type="component" value="Chromosome 1"/>
</dbReference>
<dbReference type="GO" id="GO:0005829">
    <property type="term" value="C:cytosol"/>
    <property type="evidence" value="ECO:0007669"/>
    <property type="project" value="TreeGrafter"/>
</dbReference>
<dbReference type="GO" id="GO:0005525">
    <property type="term" value="F:GTP binding"/>
    <property type="evidence" value="ECO:0007669"/>
    <property type="project" value="UniProtKB-UniRule"/>
</dbReference>
<dbReference type="GO" id="GO:0003924">
    <property type="term" value="F:GTPase activity"/>
    <property type="evidence" value="ECO:0007669"/>
    <property type="project" value="InterPro"/>
</dbReference>
<dbReference type="GO" id="GO:0097216">
    <property type="term" value="F:guanosine tetraphosphate binding"/>
    <property type="evidence" value="ECO:0007669"/>
    <property type="project" value="UniProtKB-ARBA"/>
</dbReference>
<dbReference type="GO" id="GO:0003746">
    <property type="term" value="F:translation elongation factor activity"/>
    <property type="evidence" value="ECO:0007669"/>
    <property type="project" value="UniProtKB-UniRule"/>
</dbReference>
<dbReference type="CDD" id="cd01884">
    <property type="entry name" value="EF_Tu"/>
    <property type="match status" value="1"/>
</dbReference>
<dbReference type="CDD" id="cd03697">
    <property type="entry name" value="EFTU_II"/>
    <property type="match status" value="1"/>
</dbReference>
<dbReference type="CDD" id="cd03707">
    <property type="entry name" value="EFTU_III"/>
    <property type="match status" value="1"/>
</dbReference>
<dbReference type="FunFam" id="2.40.30.10:FF:000001">
    <property type="entry name" value="Elongation factor Tu"/>
    <property type="match status" value="1"/>
</dbReference>
<dbReference type="FunFam" id="3.40.50.300:FF:000003">
    <property type="entry name" value="Elongation factor Tu"/>
    <property type="match status" value="1"/>
</dbReference>
<dbReference type="Gene3D" id="3.40.50.300">
    <property type="entry name" value="P-loop containing nucleotide triphosphate hydrolases"/>
    <property type="match status" value="1"/>
</dbReference>
<dbReference type="Gene3D" id="2.40.30.10">
    <property type="entry name" value="Translation factors"/>
    <property type="match status" value="2"/>
</dbReference>
<dbReference type="HAMAP" id="MF_00118_B">
    <property type="entry name" value="EF_Tu_B"/>
    <property type="match status" value="1"/>
</dbReference>
<dbReference type="InterPro" id="IPR041709">
    <property type="entry name" value="EF-Tu_GTP-bd"/>
</dbReference>
<dbReference type="InterPro" id="IPR050055">
    <property type="entry name" value="EF-Tu_GTPase"/>
</dbReference>
<dbReference type="InterPro" id="IPR004161">
    <property type="entry name" value="EFTu-like_2"/>
</dbReference>
<dbReference type="InterPro" id="IPR033720">
    <property type="entry name" value="EFTU_2"/>
</dbReference>
<dbReference type="InterPro" id="IPR031157">
    <property type="entry name" value="G_TR_CS"/>
</dbReference>
<dbReference type="InterPro" id="IPR027417">
    <property type="entry name" value="P-loop_NTPase"/>
</dbReference>
<dbReference type="InterPro" id="IPR005225">
    <property type="entry name" value="Small_GTP-bd"/>
</dbReference>
<dbReference type="InterPro" id="IPR000795">
    <property type="entry name" value="T_Tr_GTP-bd_dom"/>
</dbReference>
<dbReference type="InterPro" id="IPR009000">
    <property type="entry name" value="Transl_B-barrel_sf"/>
</dbReference>
<dbReference type="InterPro" id="IPR009001">
    <property type="entry name" value="Transl_elong_EF1A/Init_IF2_C"/>
</dbReference>
<dbReference type="InterPro" id="IPR004541">
    <property type="entry name" value="Transl_elong_EFTu/EF1A_bac/org"/>
</dbReference>
<dbReference type="InterPro" id="IPR004160">
    <property type="entry name" value="Transl_elong_EFTu/EF1A_C"/>
</dbReference>
<dbReference type="NCBIfam" id="TIGR00485">
    <property type="entry name" value="EF-Tu"/>
    <property type="match status" value="1"/>
</dbReference>
<dbReference type="NCBIfam" id="NF000766">
    <property type="entry name" value="PRK00049.1"/>
    <property type="match status" value="1"/>
</dbReference>
<dbReference type="NCBIfam" id="NF009372">
    <property type="entry name" value="PRK12735.1"/>
    <property type="match status" value="1"/>
</dbReference>
<dbReference type="NCBIfam" id="NF009373">
    <property type="entry name" value="PRK12736.1"/>
    <property type="match status" value="1"/>
</dbReference>
<dbReference type="NCBIfam" id="TIGR00231">
    <property type="entry name" value="small_GTP"/>
    <property type="match status" value="1"/>
</dbReference>
<dbReference type="PANTHER" id="PTHR43721:SF22">
    <property type="entry name" value="ELONGATION FACTOR TU, MITOCHONDRIAL"/>
    <property type="match status" value="1"/>
</dbReference>
<dbReference type="PANTHER" id="PTHR43721">
    <property type="entry name" value="ELONGATION FACTOR TU-RELATED"/>
    <property type="match status" value="1"/>
</dbReference>
<dbReference type="Pfam" id="PF00009">
    <property type="entry name" value="GTP_EFTU"/>
    <property type="match status" value="1"/>
</dbReference>
<dbReference type="Pfam" id="PF03144">
    <property type="entry name" value="GTP_EFTU_D2"/>
    <property type="match status" value="1"/>
</dbReference>
<dbReference type="Pfam" id="PF03143">
    <property type="entry name" value="GTP_EFTU_D3"/>
    <property type="match status" value="1"/>
</dbReference>
<dbReference type="PRINTS" id="PR00315">
    <property type="entry name" value="ELONGATNFCT"/>
</dbReference>
<dbReference type="SUPFAM" id="SSF50465">
    <property type="entry name" value="EF-Tu/eEF-1alpha/eIF2-gamma C-terminal domain"/>
    <property type="match status" value="1"/>
</dbReference>
<dbReference type="SUPFAM" id="SSF52540">
    <property type="entry name" value="P-loop containing nucleoside triphosphate hydrolases"/>
    <property type="match status" value="1"/>
</dbReference>
<dbReference type="SUPFAM" id="SSF50447">
    <property type="entry name" value="Translation proteins"/>
    <property type="match status" value="1"/>
</dbReference>
<dbReference type="PROSITE" id="PS00301">
    <property type="entry name" value="G_TR_1"/>
    <property type="match status" value="1"/>
</dbReference>
<dbReference type="PROSITE" id="PS51722">
    <property type="entry name" value="G_TR_2"/>
    <property type="match status" value="1"/>
</dbReference>
<keyword id="KW-0963">Cytoplasm</keyword>
<keyword id="KW-0251">Elongation factor</keyword>
<keyword id="KW-0342">GTP-binding</keyword>
<keyword id="KW-0378">Hydrolase</keyword>
<keyword id="KW-0460">Magnesium</keyword>
<keyword id="KW-0479">Metal-binding</keyword>
<keyword id="KW-0547">Nucleotide-binding</keyword>
<keyword id="KW-0648">Protein biosynthesis</keyword>
<keyword id="KW-1185">Reference proteome</keyword>
<reference key="1">
    <citation type="journal article" date="2011" name="J. Bacteriol.">
        <title>Genome of Ochrobactrum anthropi ATCC 49188 T, a versatile opportunistic pathogen and symbiont of several eukaryotic hosts.</title>
        <authorList>
            <person name="Chain P.S."/>
            <person name="Lang D.M."/>
            <person name="Comerci D.J."/>
            <person name="Malfatti S.A."/>
            <person name="Vergez L.M."/>
            <person name="Shin M."/>
            <person name="Ugalde R.A."/>
            <person name="Garcia E."/>
            <person name="Tolmasky M.E."/>
        </authorList>
    </citation>
    <scope>NUCLEOTIDE SEQUENCE [LARGE SCALE GENOMIC DNA]</scope>
    <source>
        <strain>ATCC 49188 / DSM 6882 / CCUG 24695 / JCM 21032 / LMG 3331 / NBRC 15819 / NCTC 12168 / Alc 37</strain>
    </source>
</reference>
<accession>A6X0A2</accession>
<proteinExistence type="inferred from homology"/>
<feature type="chain" id="PRO_0000337449" description="Elongation factor Tu">
    <location>
        <begin position="1"/>
        <end position="391"/>
    </location>
</feature>
<feature type="domain" description="tr-type G">
    <location>
        <begin position="10"/>
        <end position="201"/>
    </location>
</feature>
<feature type="region of interest" description="G1" evidence="1">
    <location>
        <begin position="19"/>
        <end position="26"/>
    </location>
</feature>
<feature type="region of interest" description="G2" evidence="1">
    <location>
        <begin position="55"/>
        <end position="59"/>
    </location>
</feature>
<feature type="region of interest" description="G3" evidence="1">
    <location>
        <begin position="76"/>
        <end position="79"/>
    </location>
</feature>
<feature type="region of interest" description="G4" evidence="1">
    <location>
        <begin position="131"/>
        <end position="134"/>
    </location>
</feature>
<feature type="region of interest" description="G5" evidence="1">
    <location>
        <begin position="169"/>
        <end position="171"/>
    </location>
</feature>
<feature type="binding site" evidence="2">
    <location>
        <begin position="19"/>
        <end position="26"/>
    </location>
    <ligand>
        <name>GTP</name>
        <dbReference type="ChEBI" id="CHEBI:37565"/>
    </ligand>
</feature>
<feature type="binding site" evidence="2">
    <location>
        <position position="26"/>
    </location>
    <ligand>
        <name>Mg(2+)</name>
        <dbReference type="ChEBI" id="CHEBI:18420"/>
    </ligand>
</feature>
<feature type="binding site" evidence="2">
    <location>
        <begin position="76"/>
        <end position="80"/>
    </location>
    <ligand>
        <name>GTP</name>
        <dbReference type="ChEBI" id="CHEBI:37565"/>
    </ligand>
</feature>
<feature type="binding site" evidence="2">
    <location>
        <begin position="131"/>
        <end position="134"/>
    </location>
    <ligand>
        <name>GTP</name>
        <dbReference type="ChEBI" id="CHEBI:37565"/>
    </ligand>
</feature>
<name>EFTU_BRUA4</name>
<sequence>MAKSKFERTKPHVNIGTIGHVDHGKTSLTAAITKFFGEFKAYDQIDAAPEERARGITISTAHVEYETPNRHYAHVDCPGHADYVKNMITGAAQMDGAILVVSAADGPMPQTREHILLARQVGVPAIVVFLNKCDQVDDAELLELVELEVRELLSKYDFPGDEVPIIKGSALAALEDSSKELGEDAVRSLMAAVDDYIPTPERPIDQPFLMPIEDVFSISGRGTVVTGRVERGIVKVGEEVEIVGIKATAKTTVTGVEMFRKLLDQGQAGDNIGALIRGVGREDVERGQVLCKPGSVKPHTKFKAEAYILTKDEGGRHTPFFTNYRPQFYFRTTDVTGVVTLPEGTEMVMPGDNVAMDVTLIVPIAMEEKLRFAIREGGRTVGAGIVSSIIE</sequence>